<feature type="chain" id="PRO_1000048691" description="Chromosomal replication initiator protein DnaA">
    <location>
        <begin position="1"/>
        <end position="511"/>
    </location>
</feature>
<feature type="region of interest" description="Domain I, interacts with DnaA modulators" evidence="1">
    <location>
        <begin position="1"/>
        <end position="90"/>
    </location>
</feature>
<feature type="region of interest" description="Domain II" evidence="1">
    <location>
        <begin position="91"/>
        <end position="174"/>
    </location>
</feature>
<feature type="region of interest" description="Disordered" evidence="2">
    <location>
        <begin position="133"/>
        <end position="162"/>
    </location>
</feature>
<feature type="region of interest" description="Domain III, AAA+ region" evidence="1">
    <location>
        <begin position="175"/>
        <end position="391"/>
    </location>
</feature>
<feature type="region of interest" description="Domain IV, binds dsDNA" evidence="1">
    <location>
        <begin position="392"/>
        <end position="511"/>
    </location>
</feature>
<feature type="compositionally biased region" description="Basic and acidic residues" evidence="2">
    <location>
        <begin position="135"/>
        <end position="144"/>
    </location>
</feature>
<feature type="binding site" evidence="1">
    <location>
        <position position="219"/>
    </location>
    <ligand>
        <name>ATP</name>
        <dbReference type="ChEBI" id="CHEBI:30616"/>
    </ligand>
</feature>
<feature type="binding site" evidence="1">
    <location>
        <position position="221"/>
    </location>
    <ligand>
        <name>ATP</name>
        <dbReference type="ChEBI" id="CHEBI:30616"/>
    </ligand>
</feature>
<feature type="binding site" evidence="1">
    <location>
        <position position="222"/>
    </location>
    <ligand>
        <name>ATP</name>
        <dbReference type="ChEBI" id="CHEBI:30616"/>
    </ligand>
</feature>
<feature type="binding site" evidence="1">
    <location>
        <position position="223"/>
    </location>
    <ligand>
        <name>ATP</name>
        <dbReference type="ChEBI" id="CHEBI:30616"/>
    </ligand>
</feature>
<name>DNAA_PSE14</name>
<sequence length="511" mass="56999">MSVELWQQCVELLRDELPAQQFNTWIRPLQVEAEGDELRVYAPNRFVLDWVNEKYLGRLLELLGEHGQGMAPALSLLIGSKRSSAPRAAPNAPLAAAASQALSANSVSSVSSSAPAMATPAAAVAVPAPVQNVAAHDEPSRDSFDPMAGASSQQAPARAEQRTVQVEGALKHTSYLNRTFTFENFVEGKSNQLARAAAWQVADNPKHGYNPLFLYGGVGLGKTHLMHAVGNHLLKKNPNAKVVYLHSERFVADMVKALQLNAINEFKRFYRSVDALLIDDIQFFARKERSQEEFFHTFNALLEGGQQVILTSDRYPKEIEGLEERLKSRFGWGLTVAVEPPELETRVAILMKKADQAKVDLPHDAAFFIAQRIRSNVRELEGALKRVIAHSHFMGRDITIELIRESLKDLLALQDKLVSVDNIQRTVAEYYKIKISDLLSKRRSRSVARPRQVAMALSKELTNHSLPEIGDVFGGRDHTTVLHACRKINELKESDADIREDYKNLLRTLTT</sequence>
<organism>
    <name type="scientific">Pseudomonas savastanoi pv. phaseolicola (strain 1448A / Race 6)</name>
    <name type="common">Pseudomonas syringae pv. phaseolicola (strain 1448A / Race 6)</name>
    <dbReference type="NCBI Taxonomy" id="264730"/>
    <lineage>
        <taxon>Bacteria</taxon>
        <taxon>Pseudomonadati</taxon>
        <taxon>Pseudomonadota</taxon>
        <taxon>Gammaproteobacteria</taxon>
        <taxon>Pseudomonadales</taxon>
        <taxon>Pseudomonadaceae</taxon>
        <taxon>Pseudomonas</taxon>
    </lineage>
</organism>
<proteinExistence type="inferred from homology"/>
<reference key="1">
    <citation type="journal article" date="2005" name="J. Bacteriol.">
        <title>Whole-genome sequence analysis of Pseudomonas syringae pv. phaseolicola 1448A reveals divergence among pathovars in genes involved in virulence and transposition.</title>
        <authorList>
            <person name="Joardar V."/>
            <person name="Lindeberg M."/>
            <person name="Jackson R.W."/>
            <person name="Selengut J."/>
            <person name="Dodson R."/>
            <person name="Brinkac L.M."/>
            <person name="Daugherty S.C."/>
            <person name="DeBoy R.T."/>
            <person name="Durkin A.S."/>
            <person name="Gwinn Giglio M."/>
            <person name="Madupu R."/>
            <person name="Nelson W.C."/>
            <person name="Rosovitz M.J."/>
            <person name="Sullivan S.A."/>
            <person name="Crabtree J."/>
            <person name="Creasy T."/>
            <person name="Davidsen T.M."/>
            <person name="Haft D.H."/>
            <person name="Zafar N."/>
            <person name="Zhou L."/>
            <person name="Halpin R."/>
            <person name="Holley T."/>
            <person name="Khouri H.M."/>
            <person name="Feldblyum T.V."/>
            <person name="White O."/>
            <person name="Fraser C.M."/>
            <person name="Chatterjee A.K."/>
            <person name="Cartinhour S."/>
            <person name="Schneider D."/>
            <person name="Mansfield J.W."/>
            <person name="Collmer A."/>
            <person name="Buell R."/>
        </authorList>
    </citation>
    <scope>NUCLEOTIDE SEQUENCE [LARGE SCALE GENOMIC DNA]</scope>
    <source>
        <strain>1448A / Race 6</strain>
    </source>
</reference>
<evidence type="ECO:0000255" key="1">
    <source>
        <dbReference type="HAMAP-Rule" id="MF_00377"/>
    </source>
</evidence>
<evidence type="ECO:0000256" key="2">
    <source>
        <dbReference type="SAM" id="MobiDB-lite"/>
    </source>
</evidence>
<comment type="function">
    <text evidence="1">Plays an essential role in the initiation and regulation of chromosomal replication. ATP-DnaA binds to the origin of replication (oriC) to initiate formation of the DNA replication initiation complex once per cell cycle. Binds the DnaA box (a 9 base pair repeat at the origin) and separates the double-stranded (ds)DNA. Forms a right-handed helical filament on oriC DNA; dsDNA binds to the exterior of the filament while single-stranded (ss)DNA is stabiized in the filament's interior. The ATP-DnaA-oriC complex binds and stabilizes one strand of the AT-rich DNA unwinding element (DUE), permitting loading of DNA polymerase. After initiation quickly degrades to an ADP-DnaA complex that is not apt for DNA replication. Binds acidic phospholipids.</text>
</comment>
<comment type="subunit">
    <text evidence="1">Oligomerizes as a right-handed, spiral filament on DNA at oriC.</text>
</comment>
<comment type="subcellular location">
    <subcellularLocation>
        <location evidence="1">Cytoplasm</location>
    </subcellularLocation>
</comment>
<comment type="domain">
    <text evidence="1">Domain I is involved in oligomerization and binding regulators, domain II is flexibile and of varying length in different bacteria, domain III forms the AAA+ region, while domain IV binds dsDNA.</text>
</comment>
<comment type="similarity">
    <text evidence="1">Belongs to the DnaA family.</text>
</comment>
<keyword id="KW-0067">ATP-binding</keyword>
<keyword id="KW-0963">Cytoplasm</keyword>
<keyword id="KW-0235">DNA replication</keyword>
<keyword id="KW-0238">DNA-binding</keyword>
<keyword id="KW-0446">Lipid-binding</keyword>
<keyword id="KW-0547">Nucleotide-binding</keyword>
<dbReference type="EMBL" id="CP000058">
    <property type="protein sequence ID" value="AAZ37173.1"/>
    <property type="molecule type" value="Genomic_DNA"/>
</dbReference>
<dbReference type="RefSeq" id="WP_004666651.1">
    <property type="nucleotide sequence ID" value="NC_005773.3"/>
</dbReference>
<dbReference type="SMR" id="Q48QK0"/>
<dbReference type="KEGG" id="psp:PSPPH_0001"/>
<dbReference type="eggNOG" id="COG0593">
    <property type="taxonomic scope" value="Bacteria"/>
</dbReference>
<dbReference type="HOGENOM" id="CLU_026910_0_1_6"/>
<dbReference type="Proteomes" id="UP000000551">
    <property type="component" value="Chromosome"/>
</dbReference>
<dbReference type="GO" id="GO:0005737">
    <property type="term" value="C:cytoplasm"/>
    <property type="evidence" value="ECO:0007669"/>
    <property type="project" value="UniProtKB-SubCell"/>
</dbReference>
<dbReference type="GO" id="GO:0005886">
    <property type="term" value="C:plasma membrane"/>
    <property type="evidence" value="ECO:0007669"/>
    <property type="project" value="TreeGrafter"/>
</dbReference>
<dbReference type="GO" id="GO:0005524">
    <property type="term" value="F:ATP binding"/>
    <property type="evidence" value="ECO:0007669"/>
    <property type="project" value="UniProtKB-UniRule"/>
</dbReference>
<dbReference type="GO" id="GO:0016887">
    <property type="term" value="F:ATP hydrolysis activity"/>
    <property type="evidence" value="ECO:0007669"/>
    <property type="project" value="InterPro"/>
</dbReference>
<dbReference type="GO" id="GO:0003688">
    <property type="term" value="F:DNA replication origin binding"/>
    <property type="evidence" value="ECO:0007669"/>
    <property type="project" value="UniProtKB-UniRule"/>
</dbReference>
<dbReference type="GO" id="GO:0008289">
    <property type="term" value="F:lipid binding"/>
    <property type="evidence" value="ECO:0007669"/>
    <property type="project" value="UniProtKB-KW"/>
</dbReference>
<dbReference type="GO" id="GO:0006270">
    <property type="term" value="P:DNA replication initiation"/>
    <property type="evidence" value="ECO:0007669"/>
    <property type="project" value="UniProtKB-UniRule"/>
</dbReference>
<dbReference type="GO" id="GO:0006275">
    <property type="term" value="P:regulation of DNA replication"/>
    <property type="evidence" value="ECO:0007669"/>
    <property type="project" value="UniProtKB-UniRule"/>
</dbReference>
<dbReference type="CDD" id="cd00009">
    <property type="entry name" value="AAA"/>
    <property type="match status" value="1"/>
</dbReference>
<dbReference type="CDD" id="cd06571">
    <property type="entry name" value="Bac_DnaA_C"/>
    <property type="match status" value="1"/>
</dbReference>
<dbReference type="FunFam" id="1.10.1750.10:FF:000001">
    <property type="entry name" value="Chromosomal replication initiator protein DnaA"/>
    <property type="match status" value="1"/>
</dbReference>
<dbReference type="FunFam" id="1.10.8.60:FF:000003">
    <property type="entry name" value="Chromosomal replication initiator protein DnaA"/>
    <property type="match status" value="1"/>
</dbReference>
<dbReference type="FunFam" id="3.40.50.300:FF:000103">
    <property type="entry name" value="Chromosomal replication initiator protein DnaA"/>
    <property type="match status" value="1"/>
</dbReference>
<dbReference type="Gene3D" id="1.10.1750.10">
    <property type="match status" value="1"/>
</dbReference>
<dbReference type="Gene3D" id="1.10.8.60">
    <property type="match status" value="1"/>
</dbReference>
<dbReference type="Gene3D" id="3.30.300.180">
    <property type="match status" value="1"/>
</dbReference>
<dbReference type="Gene3D" id="3.40.50.300">
    <property type="entry name" value="P-loop containing nucleotide triphosphate hydrolases"/>
    <property type="match status" value="1"/>
</dbReference>
<dbReference type="HAMAP" id="MF_00377">
    <property type="entry name" value="DnaA_bact"/>
    <property type="match status" value="1"/>
</dbReference>
<dbReference type="InterPro" id="IPR003593">
    <property type="entry name" value="AAA+_ATPase"/>
</dbReference>
<dbReference type="InterPro" id="IPR001957">
    <property type="entry name" value="Chromosome_initiator_DnaA"/>
</dbReference>
<dbReference type="InterPro" id="IPR020591">
    <property type="entry name" value="Chromosome_initiator_DnaA-like"/>
</dbReference>
<dbReference type="InterPro" id="IPR018312">
    <property type="entry name" value="Chromosome_initiator_DnaA_CS"/>
</dbReference>
<dbReference type="InterPro" id="IPR013159">
    <property type="entry name" value="DnaA_C"/>
</dbReference>
<dbReference type="InterPro" id="IPR013317">
    <property type="entry name" value="DnaA_dom"/>
</dbReference>
<dbReference type="InterPro" id="IPR024633">
    <property type="entry name" value="DnaA_N_dom"/>
</dbReference>
<dbReference type="InterPro" id="IPR038454">
    <property type="entry name" value="DnaA_N_sf"/>
</dbReference>
<dbReference type="InterPro" id="IPR027417">
    <property type="entry name" value="P-loop_NTPase"/>
</dbReference>
<dbReference type="InterPro" id="IPR010921">
    <property type="entry name" value="Trp_repressor/repl_initiator"/>
</dbReference>
<dbReference type="NCBIfam" id="TIGR00362">
    <property type="entry name" value="DnaA"/>
    <property type="match status" value="1"/>
</dbReference>
<dbReference type="PANTHER" id="PTHR30050">
    <property type="entry name" value="CHROMOSOMAL REPLICATION INITIATOR PROTEIN DNAA"/>
    <property type="match status" value="1"/>
</dbReference>
<dbReference type="PANTHER" id="PTHR30050:SF2">
    <property type="entry name" value="CHROMOSOMAL REPLICATION INITIATOR PROTEIN DNAA"/>
    <property type="match status" value="1"/>
</dbReference>
<dbReference type="Pfam" id="PF00308">
    <property type="entry name" value="Bac_DnaA"/>
    <property type="match status" value="1"/>
</dbReference>
<dbReference type="Pfam" id="PF08299">
    <property type="entry name" value="Bac_DnaA_C"/>
    <property type="match status" value="1"/>
</dbReference>
<dbReference type="Pfam" id="PF11638">
    <property type="entry name" value="DnaA_N"/>
    <property type="match status" value="1"/>
</dbReference>
<dbReference type="PRINTS" id="PR00051">
    <property type="entry name" value="DNAA"/>
</dbReference>
<dbReference type="SMART" id="SM00382">
    <property type="entry name" value="AAA"/>
    <property type="match status" value="1"/>
</dbReference>
<dbReference type="SMART" id="SM00760">
    <property type="entry name" value="Bac_DnaA_C"/>
    <property type="match status" value="1"/>
</dbReference>
<dbReference type="SUPFAM" id="SSF52540">
    <property type="entry name" value="P-loop containing nucleoside triphosphate hydrolases"/>
    <property type="match status" value="1"/>
</dbReference>
<dbReference type="SUPFAM" id="SSF48295">
    <property type="entry name" value="TrpR-like"/>
    <property type="match status" value="1"/>
</dbReference>
<dbReference type="PROSITE" id="PS01008">
    <property type="entry name" value="DNAA"/>
    <property type="match status" value="1"/>
</dbReference>
<accession>Q48QK0</accession>
<protein>
    <recommendedName>
        <fullName evidence="1">Chromosomal replication initiator protein DnaA</fullName>
    </recommendedName>
</protein>
<gene>
    <name evidence="1" type="primary">dnaA</name>
    <name type="ordered locus">PSPPH_0001</name>
</gene>